<organism>
    <name type="scientific">Aster yellows witches'-broom phytoplasma (strain AYWB)</name>
    <dbReference type="NCBI Taxonomy" id="322098"/>
    <lineage>
        <taxon>Bacteria</taxon>
        <taxon>Bacillati</taxon>
        <taxon>Mycoplasmatota</taxon>
        <taxon>Mollicutes</taxon>
        <taxon>Acholeplasmatales</taxon>
        <taxon>Acholeplasmataceae</taxon>
        <taxon>Candidatus Phytoplasma</taxon>
        <taxon>16SrI (Aster yellows group)</taxon>
    </lineage>
</organism>
<keyword id="KW-0687">Ribonucleoprotein</keyword>
<keyword id="KW-0689">Ribosomal protein</keyword>
<keyword id="KW-0694">RNA-binding</keyword>
<keyword id="KW-0699">rRNA-binding</keyword>
<evidence type="ECO:0000255" key="1">
    <source>
        <dbReference type="HAMAP-Rule" id="MF_00500"/>
    </source>
</evidence>
<evidence type="ECO:0000256" key="2">
    <source>
        <dbReference type="SAM" id="MobiDB-lite"/>
    </source>
</evidence>
<evidence type="ECO:0000305" key="3"/>
<sequence length="86" mass="9825">MANIKQQKKRNKTNEKRRLQNFSFKSSVKTVVKQVKTAVANADKQKALALLSVAYKKFDKGVSKRVYHANFSARNKSDLQKLVNTL</sequence>
<dbReference type="EMBL" id="CP000061">
    <property type="protein sequence ID" value="ABC65750.1"/>
    <property type="molecule type" value="Genomic_DNA"/>
</dbReference>
<dbReference type="RefSeq" id="WP_011412911.1">
    <property type="nucleotide sequence ID" value="NC_007716.1"/>
</dbReference>
<dbReference type="SMR" id="Q2NIJ3"/>
<dbReference type="STRING" id="322098.AYWB_633"/>
<dbReference type="KEGG" id="ayw:AYWB_633"/>
<dbReference type="eggNOG" id="COG0268">
    <property type="taxonomic scope" value="Bacteria"/>
</dbReference>
<dbReference type="HOGENOM" id="CLU_160655_0_1_14"/>
<dbReference type="OrthoDB" id="9808392at2"/>
<dbReference type="PhylomeDB" id="Q2NIJ3"/>
<dbReference type="Proteomes" id="UP000001934">
    <property type="component" value="Chromosome"/>
</dbReference>
<dbReference type="GO" id="GO:0005829">
    <property type="term" value="C:cytosol"/>
    <property type="evidence" value="ECO:0007669"/>
    <property type="project" value="TreeGrafter"/>
</dbReference>
<dbReference type="GO" id="GO:0015935">
    <property type="term" value="C:small ribosomal subunit"/>
    <property type="evidence" value="ECO:0007669"/>
    <property type="project" value="TreeGrafter"/>
</dbReference>
<dbReference type="GO" id="GO:0070181">
    <property type="term" value="F:small ribosomal subunit rRNA binding"/>
    <property type="evidence" value="ECO:0007669"/>
    <property type="project" value="TreeGrafter"/>
</dbReference>
<dbReference type="GO" id="GO:0003735">
    <property type="term" value="F:structural constituent of ribosome"/>
    <property type="evidence" value="ECO:0007669"/>
    <property type="project" value="InterPro"/>
</dbReference>
<dbReference type="GO" id="GO:0006412">
    <property type="term" value="P:translation"/>
    <property type="evidence" value="ECO:0007669"/>
    <property type="project" value="UniProtKB-UniRule"/>
</dbReference>
<dbReference type="FunFam" id="1.20.58.110:FF:000001">
    <property type="entry name" value="30S ribosomal protein S20"/>
    <property type="match status" value="1"/>
</dbReference>
<dbReference type="Gene3D" id="1.20.58.110">
    <property type="entry name" value="Ribosomal protein S20"/>
    <property type="match status" value="1"/>
</dbReference>
<dbReference type="HAMAP" id="MF_00500">
    <property type="entry name" value="Ribosomal_bS20"/>
    <property type="match status" value="1"/>
</dbReference>
<dbReference type="InterPro" id="IPR002583">
    <property type="entry name" value="Ribosomal_bS20"/>
</dbReference>
<dbReference type="InterPro" id="IPR036510">
    <property type="entry name" value="Ribosomal_bS20_sf"/>
</dbReference>
<dbReference type="NCBIfam" id="TIGR00029">
    <property type="entry name" value="S20"/>
    <property type="match status" value="1"/>
</dbReference>
<dbReference type="PANTHER" id="PTHR33398">
    <property type="entry name" value="30S RIBOSOMAL PROTEIN S20"/>
    <property type="match status" value="1"/>
</dbReference>
<dbReference type="PANTHER" id="PTHR33398:SF1">
    <property type="entry name" value="SMALL RIBOSOMAL SUBUNIT PROTEIN BS20C"/>
    <property type="match status" value="1"/>
</dbReference>
<dbReference type="Pfam" id="PF01649">
    <property type="entry name" value="Ribosomal_S20p"/>
    <property type="match status" value="1"/>
</dbReference>
<dbReference type="SUPFAM" id="SSF46992">
    <property type="entry name" value="Ribosomal protein S20"/>
    <property type="match status" value="1"/>
</dbReference>
<comment type="function">
    <text evidence="1">Binds directly to 16S ribosomal RNA.</text>
</comment>
<comment type="similarity">
    <text evidence="1">Belongs to the bacterial ribosomal protein bS20 family.</text>
</comment>
<protein>
    <recommendedName>
        <fullName evidence="1">Small ribosomal subunit protein bS20</fullName>
    </recommendedName>
    <alternativeName>
        <fullName evidence="3">30S ribosomal protein S20</fullName>
    </alternativeName>
</protein>
<gene>
    <name evidence="1" type="primary">rpsT</name>
    <name type="ordered locus">AYWB_633</name>
</gene>
<name>RS20_AYWBP</name>
<reference key="1">
    <citation type="journal article" date="2006" name="J. Bacteriol.">
        <title>Living with genome instability: the adaptation of phytoplasmas to diverse environments of their insect and plant hosts.</title>
        <authorList>
            <person name="Bai X."/>
            <person name="Zhang J."/>
            <person name="Ewing A."/>
            <person name="Miller S.A."/>
            <person name="Jancso Radek A."/>
            <person name="Shevchenko D.V."/>
            <person name="Tsukerman K."/>
            <person name="Walunas T."/>
            <person name="Lapidus A."/>
            <person name="Campbell J.W."/>
            <person name="Hogenhout S.A."/>
        </authorList>
    </citation>
    <scope>NUCLEOTIDE SEQUENCE [LARGE SCALE GENOMIC DNA]</scope>
    <source>
        <strain>AYWB</strain>
    </source>
</reference>
<accession>Q2NIJ3</accession>
<proteinExistence type="inferred from homology"/>
<feature type="chain" id="PRO_0000236423" description="Small ribosomal subunit protein bS20">
    <location>
        <begin position="1"/>
        <end position="86"/>
    </location>
</feature>
<feature type="region of interest" description="Disordered" evidence="2">
    <location>
        <begin position="1"/>
        <end position="20"/>
    </location>
</feature>
<feature type="compositionally biased region" description="Basic residues" evidence="2">
    <location>
        <begin position="1"/>
        <end position="11"/>
    </location>
</feature>